<protein>
    <recommendedName>
        <fullName evidence="2">Large ribosomal subunit protein eL18x</fullName>
    </recommendedName>
    <alternativeName>
        <fullName>60S ribosomal protein L18-3</fullName>
    </alternativeName>
</protein>
<comment type="similarity">
    <text evidence="3">Belongs to the eukaryotic ribosomal protein eL18 family.</text>
</comment>
<organism>
    <name type="scientific">Arabidopsis thaliana</name>
    <name type="common">Mouse-ear cress</name>
    <dbReference type="NCBI Taxonomy" id="3702"/>
    <lineage>
        <taxon>Eukaryota</taxon>
        <taxon>Viridiplantae</taxon>
        <taxon>Streptophyta</taxon>
        <taxon>Embryophyta</taxon>
        <taxon>Tracheophyta</taxon>
        <taxon>Spermatophyta</taxon>
        <taxon>Magnoliopsida</taxon>
        <taxon>eudicotyledons</taxon>
        <taxon>Gunneridae</taxon>
        <taxon>Pentapetalae</taxon>
        <taxon>rosids</taxon>
        <taxon>malvids</taxon>
        <taxon>Brassicales</taxon>
        <taxon>Brassicaceae</taxon>
        <taxon>Camelineae</taxon>
        <taxon>Arabidopsis</taxon>
    </lineage>
</organism>
<reference key="1">
    <citation type="journal article" date="2000" name="Nature">
        <title>Sequence and analysis of chromosome 5 of the plant Arabidopsis thaliana.</title>
        <authorList>
            <person name="Tabata S."/>
            <person name="Kaneko T."/>
            <person name="Nakamura Y."/>
            <person name="Kotani H."/>
            <person name="Kato T."/>
            <person name="Asamizu E."/>
            <person name="Miyajima N."/>
            <person name="Sasamoto S."/>
            <person name="Kimura T."/>
            <person name="Hosouchi T."/>
            <person name="Kawashima K."/>
            <person name="Kohara M."/>
            <person name="Matsumoto M."/>
            <person name="Matsuno A."/>
            <person name="Muraki A."/>
            <person name="Nakayama S."/>
            <person name="Nakazaki N."/>
            <person name="Naruo K."/>
            <person name="Okumura S."/>
            <person name="Shinpo S."/>
            <person name="Takeuchi C."/>
            <person name="Wada T."/>
            <person name="Watanabe A."/>
            <person name="Yamada M."/>
            <person name="Yasuda M."/>
            <person name="Sato S."/>
            <person name="de la Bastide M."/>
            <person name="Huang E."/>
            <person name="Spiegel L."/>
            <person name="Gnoj L."/>
            <person name="O'Shaughnessy A."/>
            <person name="Preston R."/>
            <person name="Habermann K."/>
            <person name="Murray J."/>
            <person name="Johnson D."/>
            <person name="Rohlfing T."/>
            <person name="Nelson J."/>
            <person name="Stoneking T."/>
            <person name="Pepin K."/>
            <person name="Spieth J."/>
            <person name="Sekhon M."/>
            <person name="Armstrong J."/>
            <person name="Becker M."/>
            <person name="Belter E."/>
            <person name="Cordum H."/>
            <person name="Cordes M."/>
            <person name="Courtney L."/>
            <person name="Courtney W."/>
            <person name="Dante M."/>
            <person name="Du H."/>
            <person name="Edwards J."/>
            <person name="Fryman J."/>
            <person name="Haakensen B."/>
            <person name="Lamar E."/>
            <person name="Latreille P."/>
            <person name="Leonard S."/>
            <person name="Meyer R."/>
            <person name="Mulvaney E."/>
            <person name="Ozersky P."/>
            <person name="Riley A."/>
            <person name="Strowmatt C."/>
            <person name="Wagner-McPherson C."/>
            <person name="Wollam A."/>
            <person name="Yoakum M."/>
            <person name="Bell M."/>
            <person name="Dedhia N."/>
            <person name="Parnell L."/>
            <person name="Shah R."/>
            <person name="Rodriguez M."/>
            <person name="Hoon See L."/>
            <person name="Vil D."/>
            <person name="Baker J."/>
            <person name="Kirchoff K."/>
            <person name="Toth K."/>
            <person name="King L."/>
            <person name="Bahret A."/>
            <person name="Miller B."/>
            <person name="Marra M.A."/>
            <person name="Martienssen R."/>
            <person name="McCombie W.R."/>
            <person name="Wilson R.K."/>
            <person name="Murphy G."/>
            <person name="Bancroft I."/>
            <person name="Volckaert G."/>
            <person name="Wambutt R."/>
            <person name="Duesterhoeft A."/>
            <person name="Stiekema W."/>
            <person name="Pohl T."/>
            <person name="Entian K.-D."/>
            <person name="Terryn N."/>
            <person name="Hartley N."/>
            <person name="Bent E."/>
            <person name="Johnson S."/>
            <person name="Langham S.-A."/>
            <person name="McCullagh B."/>
            <person name="Robben J."/>
            <person name="Grymonprez B."/>
            <person name="Zimmermann W."/>
            <person name="Ramsperger U."/>
            <person name="Wedler H."/>
            <person name="Balke K."/>
            <person name="Wedler E."/>
            <person name="Peters S."/>
            <person name="van Staveren M."/>
            <person name="Dirkse W."/>
            <person name="Mooijman P."/>
            <person name="Klein Lankhorst R."/>
            <person name="Weitzenegger T."/>
            <person name="Bothe G."/>
            <person name="Rose M."/>
            <person name="Hauf J."/>
            <person name="Berneiser S."/>
            <person name="Hempel S."/>
            <person name="Feldpausch M."/>
            <person name="Lamberth S."/>
            <person name="Villarroel R."/>
            <person name="Gielen J."/>
            <person name="Ardiles W."/>
            <person name="Bents O."/>
            <person name="Lemcke K."/>
            <person name="Kolesov G."/>
            <person name="Mayer K.F.X."/>
            <person name="Rudd S."/>
            <person name="Schoof H."/>
            <person name="Schueller C."/>
            <person name="Zaccaria P."/>
            <person name="Mewes H.-W."/>
            <person name="Bevan M."/>
            <person name="Fransz P.F."/>
        </authorList>
    </citation>
    <scope>NUCLEOTIDE SEQUENCE [LARGE SCALE GENOMIC DNA]</scope>
    <source>
        <strain>cv. Columbia</strain>
    </source>
</reference>
<reference key="2">
    <citation type="journal article" date="2017" name="Plant J.">
        <title>Araport11: a complete reannotation of the Arabidopsis thaliana reference genome.</title>
        <authorList>
            <person name="Cheng C.Y."/>
            <person name="Krishnakumar V."/>
            <person name="Chan A.P."/>
            <person name="Thibaud-Nissen F."/>
            <person name="Schobel S."/>
            <person name="Town C.D."/>
        </authorList>
    </citation>
    <scope>GENOME REANNOTATION</scope>
    <source>
        <strain>cv. Columbia</strain>
    </source>
</reference>
<reference key="3">
    <citation type="journal article" date="2003" name="Science">
        <title>Empirical analysis of transcriptional activity in the Arabidopsis genome.</title>
        <authorList>
            <person name="Yamada K."/>
            <person name="Lim J."/>
            <person name="Dale J.M."/>
            <person name="Chen H."/>
            <person name="Shinn P."/>
            <person name="Palm C.J."/>
            <person name="Southwick A.M."/>
            <person name="Wu H.C."/>
            <person name="Kim C.J."/>
            <person name="Nguyen M."/>
            <person name="Pham P.K."/>
            <person name="Cheuk R.F."/>
            <person name="Karlin-Newmann G."/>
            <person name="Liu S.X."/>
            <person name="Lam B."/>
            <person name="Sakano H."/>
            <person name="Wu T."/>
            <person name="Yu G."/>
            <person name="Miranda M."/>
            <person name="Quach H.L."/>
            <person name="Tripp M."/>
            <person name="Chang C.H."/>
            <person name="Lee J.M."/>
            <person name="Toriumi M.J."/>
            <person name="Chan M.M."/>
            <person name="Tang C.C."/>
            <person name="Onodera C.S."/>
            <person name="Deng J.M."/>
            <person name="Akiyama K."/>
            <person name="Ansari Y."/>
            <person name="Arakawa T."/>
            <person name="Banh J."/>
            <person name="Banno F."/>
            <person name="Bowser L."/>
            <person name="Brooks S.Y."/>
            <person name="Carninci P."/>
            <person name="Chao Q."/>
            <person name="Choy N."/>
            <person name="Enju A."/>
            <person name="Goldsmith A.D."/>
            <person name="Gurjal M."/>
            <person name="Hansen N.F."/>
            <person name="Hayashizaki Y."/>
            <person name="Johnson-Hopson C."/>
            <person name="Hsuan V.W."/>
            <person name="Iida K."/>
            <person name="Karnes M."/>
            <person name="Khan S."/>
            <person name="Koesema E."/>
            <person name="Ishida J."/>
            <person name="Jiang P.X."/>
            <person name="Jones T."/>
            <person name="Kawai J."/>
            <person name="Kamiya A."/>
            <person name="Meyers C."/>
            <person name="Nakajima M."/>
            <person name="Narusaka M."/>
            <person name="Seki M."/>
            <person name="Sakurai T."/>
            <person name="Satou M."/>
            <person name="Tamse R."/>
            <person name="Vaysberg M."/>
            <person name="Wallender E.K."/>
            <person name="Wong C."/>
            <person name="Yamamura Y."/>
            <person name="Yuan S."/>
            <person name="Shinozaki K."/>
            <person name="Davis R.W."/>
            <person name="Theologis A."/>
            <person name="Ecker J.R."/>
        </authorList>
    </citation>
    <scope>NUCLEOTIDE SEQUENCE [LARGE SCALE MRNA]</scope>
    <source>
        <strain>cv. Columbia</strain>
    </source>
</reference>
<reference key="4">
    <citation type="journal article" date="2001" name="Plant Physiol.">
        <title>The organization of cytoplasmic ribosomal protein genes in the Arabidopsis genome.</title>
        <authorList>
            <person name="Barakat A."/>
            <person name="Szick-Miranda K."/>
            <person name="Chang I.-F."/>
            <person name="Guyot R."/>
            <person name="Blanc G."/>
            <person name="Cooke R."/>
            <person name="Delseny M."/>
            <person name="Bailey-Serres J."/>
        </authorList>
    </citation>
    <scope>GENE FAMILY ORGANIZATION</scope>
    <scope>NOMENCLATURE</scope>
</reference>
<reference key="5">
    <citation type="journal article" date="2023" name="Plant Cell">
        <title>An updated nomenclature for plant ribosomal protein genes.</title>
        <authorList>
            <person name="Scarpin M.R."/>
            <person name="Busche M."/>
            <person name="Martinez R.E."/>
            <person name="Harper L.C."/>
            <person name="Reiser L."/>
            <person name="Szakonyi D."/>
            <person name="Merchante C."/>
            <person name="Lan T."/>
            <person name="Xiong W."/>
            <person name="Mo B."/>
            <person name="Tang G."/>
            <person name="Chen X."/>
            <person name="Bailey-Serres J."/>
            <person name="Browning K.S."/>
            <person name="Brunkard J.O."/>
        </authorList>
    </citation>
    <scope>NOMENCLATURE</scope>
</reference>
<keyword id="KW-1185">Reference proteome</keyword>
<keyword id="KW-0687">Ribonucleoprotein</keyword>
<keyword id="KW-0689">Ribosomal protein</keyword>
<accession>Q940B0</accession>
<proteinExistence type="evidence at transcript level"/>
<feature type="chain" id="PRO_0000240520" description="Large ribosomal subunit protein eL18x">
    <location>
        <begin position="1"/>
        <end position="187"/>
    </location>
</feature>
<feature type="region of interest" description="Disordered" evidence="1">
    <location>
        <begin position="150"/>
        <end position="187"/>
    </location>
</feature>
<feature type="compositionally biased region" description="Basic residues" evidence="1">
    <location>
        <begin position="165"/>
        <end position="187"/>
    </location>
</feature>
<evidence type="ECO:0000256" key="1">
    <source>
        <dbReference type="SAM" id="MobiDB-lite"/>
    </source>
</evidence>
<evidence type="ECO:0000303" key="2">
    <source>
    </source>
</evidence>
<evidence type="ECO:0000305" key="3"/>
<gene>
    <name type="primary">RPL18C</name>
    <name type="ordered locus">At5g27850</name>
    <name type="ORF">F14I23.10</name>
</gene>
<name>RL183_ARATH</name>
<sequence>MGIDLIAGGKSKKTKRTAPKSDDVYLKLLVKLYRFLVRRSNSNFNAVILKRLFMSKVNKAPLSLSRLVEFMTGKDDKIAVLVGTITDDLRVHEIPAMKVTALRFTERARARIEKAGGECLTFDQLALRAPLGQNTVLLRGPKNSREAVKHFGPAPGVPHSNTKPYVRHKGRKFEKARGKRKSRGFKV</sequence>
<dbReference type="EMBL" id="AC007399">
    <property type="status" value="NOT_ANNOTATED_CDS"/>
    <property type="molecule type" value="Genomic_DNA"/>
</dbReference>
<dbReference type="EMBL" id="CP002688">
    <property type="protein sequence ID" value="AED93736.1"/>
    <property type="molecule type" value="Genomic_DNA"/>
</dbReference>
<dbReference type="EMBL" id="AY056141">
    <property type="protein sequence ID" value="AAL07220.1"/>
    <property type="molecule type" value="mRNA"/>
</dbReference>
<dbReference type="EMBL" id="AY122996">
    <property type="protein sequence ID" value="AAM67529.1"/>
    <property type="molecule type" value="mRNA"/>
</dbReference>
<dbReference type="EMBL" id="BT000711">
    <property type="protein sequence ID" value="AAN31854.1"/>
    <property type="molecule type" value="mRNA"/>
</dbReference>
<dbReference type="RefSeq" id="NP_198137.1">
    <property type="nucleotide sequence ID" value="NM_122667.4"/>
</dbReference>
<dbReference type="SMR" id="Q940B0"/>
<dbReference type="BioGRID" id="18122">
    <property type="interactions" value="170"/>
</dbReference>
<dbReference type="FunCoup" id="Q940B0">
    <property type="interactions" value="3595"/>
</dbReference>
<dbReference type="IntAct" id="Q940B0">
    <property type="interactions" value="4"/>
</dbReference>
<dbReference type="STRING" id="3702.Q940B0"/>
<dbReference type="iPTMnet" id="Q940B0"/>
<dbReference type="PaxDb" id="3702-AT5G27850.1"/>
<dbReference type="ProteomicsDB" id="236205"/>
<dbReference type="EnsemblPlants" id="AT5G27850.1">
    <property type="protein sequence ID" value="AT5G27850.1"/>
    <property type="gene ID" value="AT5G27850"/>
</dbReference>
<dbReference type="GeneID" id="832848"/>
<dbReference type="Gramene" id="AT5G27850.1">
    <property type="protein sequence ID" value="AT5G27850.1"/>
    <property type="gene ID" value="AT5G27850"/>
</dbReference>
<dbReference type="KEGG" id="ath:AT5G27850"/>
<dbReference type="Araport" id="AT5G27850"/>
<dbReference type="TAIR" id="AT5G27850">
    <property type="gene designation" value="RPL18C"/>
</dbReference>
<dbReference type="eggNOG" id="KOG1714">
    <property type="taxonomic scope" value="Eukaryota"/>
</dbReference>
<dbReference type="HOGENOM" id="CLU_080024_0_0_1"/>
<dbReference type="InParanoid" id="Q940B0"/>
<dbReference type="OMA" id="KIVALKW"/>
<dbReference type="PhylomeDB" id="Q940B0"/>
<dbReference type="CD-CODE" id="4299E36E">
    <property type="entry name" value="Nucleolus"/>
</dbReference>
<dbReference type="PRO" id="PR:Q940B0"/>
<dbReference type="Proteomes" id="UP000006548">
    <property type="component" value="Chromosome 5"/>
</dbReference>
<dbReference type="ExpressionAtlas" id="Q940B0">
    <property type="expression patterns" value="baseline and differential"/>
</dbReference>
<dbReference type="GO" id="GO:0022625">
    <property type="term" value="C:cytosolic large ribosomal subunit"/>
    <property type="evidence" value="ECO:0007005"/>
    <property type="project" value="TAIR"/>
</dbReference>
<dbReference type="GO" id="GO:0022626">
    <property type="term" value="C:cytosolic ribosome"/>
    <property type="evidence" value="ECO:0007005"/>
    <property type="project" value="TAIR"/>
</dbReference>
<dbReference type="GO" id="GO:0009506">
    <property type="term" value="C:plasmodesma"/>
    <property type="evidence" value="ECO:0007005"/>
    <property type="project" value="TAIR"/>
</dbReference>
<dbReference type="GO" id="GO:0009536">
    <property type="term" value="C:plastid"/>
    <property type="evidence" value="ECO:0007005"/>
    <property type="project" value="TAIR"/>
</dbReference>
<dbReference type="GO" id="GO:0005773">
    <property type="term" value="C:vacuole"/>
    <property type="evidence" value="ECO:0007005"/>
    <property type="project" value="TAIR"/>
</dbReference>
<dbReference type="GO" id="GO:0003729">
    <property type="term" value="F:mRNA binding"/>
    <property type="evidence" value="ECO:0000314"/>
    <property type="project" value="TAIR"/>
</dbReference>
<dbReference type="GO" id="GO:0003735">
    <property type="term" value="F:structural constituent of ribosome"/>
    <property type="evidence" value="ECO:0000314"/>
    <property type="project" value="CAFA"/>
</dbReference>
<dbReference type="GO" id="GO:0006412">
    <property type="term" value="P:translation"/>
    <property type="evidence" value="ECO:0007669"/>
    <property type="project" value="InterPro"/>
</dbReference>
<dbReference type="FunFam" id="3.100.10.10:FF:000001">
    <property type="entry name" value="60S ribosomal protein L18"/>
    <property type="match status" value="1"/>
</dbReference>
<dbReference type="Gene3D" id="3.100.10.10">
    <property type="match status" value="1"/>
</dbReference>
<dbReference type="InterPro" id="IPR000039">
    <property type="entry name" value="Ribosomal_eL18"/>
</dbReference>
<dbReference type="InterPro" id="IPR021131">
    <property type="entry name" value="Ribosomal_uL15/eL18"/>
</dbReference>
<dbReference type="InterPro" id="IPR036227">
    <property type="entry name" value="Ribosomal_uL15/eL18_sf"/>
</dbReference>
<dbReference type="PANTHER" id="PTHR10934">
    <property type="entry name" value="60S RIBOSOMAL PROTEIN L18"/>
    <property type="match status" value="1"/>
</dbReference>
<dbReference type="PANTHER" id="PTHR10934:SF25">
    <property type="entry name" value="LARGE RIBOSOMAL SUBUNIT PROTEIN EL18X-RELATED"/>
    <property type="match status" value="1"/>
</dbReference>
<dbReference type="Pfam" id="PF17135">
    <property type="entry name" value="Ribosomal_L18"/>
    <property type="match status" value="1"/>
</dbReference>
<dbReference type="SUPFAM" id="SSF52080">
    <property type="entry name" value="Ribosomal proteins L15p and L18e"/>
    <property type="match status" value="1"/>
</dbReference>